<feature type="chain" id="PRO_0000275203" description="ATP synthase epsilon chain, chloroplastic">
    <location>
        <begin position="1"/>
        <end position="133"/>
    </location>
</feature>
<accession>Q06RC3</accession>
<keyword id="KW-0066">ATP synthesis</keyword>
<keyword id="KW-0139">CF(1)</keyword>
<keyword id="KW-0150">Chloroplast</keyword>
<keyword id="KW-0375">Hydrogen ion transport</keyword>
<keyword id="KW-0406">Ion transport</keyword>
<keyword id="KW-0472">Membrane</keyword>
<keyword id="KW-0934">Plastid</keyword>
<keyword id="KW-0793">Thylakoid</keyword>
<keyword id="KW-0813">Transport</keyword>
<comment type="function">
    <text evidence="1">Produces ATP from ADP in the presence of a proton gradient across the membrane.</text>
</comment>
<comment type="subunit">
    <text evidence="1">F-type ATPases have 2 components, CF(1) - the catalytic core - and CF(0) - the membrane proton channel. CF(1) has five subunits: alpha(3), beta(3), gamma(1), delta(1), epsilon(1). CF(0) has three main subunits: a, b and c.</text>
</comment>
<comment type="subcellular location">
    <subcellularLocation>
        <location evidence="1">Plastid</location>
        <location evidence="1">Chloroplast thylakoid membrane</location>
        <topology evidence="1">Peripheral membrane protein</topology>
    </subcellularLocation>
</comment>
<comment type="similarity">
    <text evidence="1">Belongs to the ATPase epsilon chain family.</text>
</comment>
<organism>
    <name type="scientific">Jasminum nudiflorum</name>
    <name type="common">Winter jasmine</name>
    <dbReference type="NCBI Taxonomy" id="126431"/>
    <lineage>
        <taxon>Eukaryota</taxon>
        <taxon>Viridiplantae</taxon>
        <taxon>Streptophyta</taxon>
        <taxon>Embryophyta</taxon>
        <taxon>Tracheophyta</taxon>
        <taxon>Spermatophyta</taxon>
        <taxon>Magnoliopsida</taxon>
        <taxon>eudicotyledons</taxon>
        <taxon>Gunneridae</taxon>
        <taxon>Pentapetalae</taxon>
        <taxon>asterids</taxon>
        <taxon>lamiids</taxon>
        <taxon>Lamiales</taxon>
        <taxon>Oleaceae</taxon>
        <taxon>Jasmineae</taxon>
        <taxon>Jasminum</taxon>
    </lineage>
</organism>
<proteinExistence type="inferred from homology"/>
<gene>
    <name evidence="1" type="primary">atpE</name>
    <name type="ORF">JNC0586</name>
</gene>
<reference key="1">
    <citation type="journal article" date="2007" name="Mol. Biol. Evol.">
        <title>Gene relocations within chloroplast genomes of Jasminum and Menodora (Oleaceae) are due to multiple, overlapping inversions.</title>
        <authorList>
            <person name="Lee H.-L."/>
            <person name="Jansen R.K."/>
            <person name="Chumley T.W."/>
            <person name="Kim K.-J."/>
        </authorList>
    </citation>
    <scope>NUCLEOTIDE SEQUENCE [LARGE SCALE GENOMIC DNA]</scope>
</reference>
<evidence type="ECO:0000255" key="1">
    <source>
        <dbReference type="HAMAP-Rule" id="MF_00530"/>
    </source>
</evidence>
<dbReference type="EMBL" id="DQ673255">
    <property type="protein sequence ID" value="ABG74636.1"/>
    <property type="molecule type" value="Genomic_DNA"/>
</dbReference>
<dbReference type="RefSeq" id="YP_778498.1">
    <property type="nucleotide sequence ID" value="NC_008407.1"/>
</dbReference>
<dbReference type="SMR" id="Q06RC3"/>
<dbReference type="GeneID" id="4319766"/>
<dbReference type="GO" id="GO:0009535">
    <property type="term" value="C:chloroplast thylakoid membrane"/>
    <property type="evidence" value="ECO:0007669"/>
    <property type="project" value="UniProtKB-SubCell"/>
</dbReference>
<dbReference type="GO" id="GO:0045259">
    <property type="term" value="C:proton-transporting ATP synthase complex"/>
    <property type="evidence" value="ECO:0007669"/>
    <property type="project" value="UniProtKB-KW"/>
</dbReference>
<dbReference type="GO" id="GO:0005524">
    <property type="term" value="F:ATP binding"/>
    <property type="evidence" value="ECO:0007669"/>
    <property type="project" value="UniProtKB-UniRule"/>
</dbReference>
<dbReference type="GO" id="GO:0046933">
    <property type="term" value="F:proton-transporting ATP synthase activity, rotational mechanism"/>
    <property type="evidence" value="ECO:0007669"/>
    <property type="project" value="UniProtKB-UniRule"/>
</dbReference>
<dbReference type="CDD" id="cd12152">
    <property type="entry name" value="F1-ATPase_delta"/>
    <property type="match status" value="1"/>
</dbReference>
<dbReference type="FunFam" id="2.60.15.10:FF:000002">
    <property type="entry name" value="ATP synthase epsilon chain, chloroplastic"/>
    <property type="match status" value="1"/>
</dbReference>
<dbReference type="Gene3D" id="6.10.140.480">
    <property type="match status" value="1"/>
</dbReference>
<dbReference type="Gene3D" id="2.60.15.10">
    <property type="entry name" value="F0F1 ATP synthase delta/epsilon subunit, N-terminal"/>
    <property type="match status" value="1"/>
</dbReference>
<dbReference type="HAMAP" id="MF_00530">
    <property type="entry name" value="ATP_synth_epsil_bac"/>
    <property type="match status" value="1"/>
</dbReference>
<dbReference type="InterPro" id="IPR001469">
    <property type="entry name" value="ATP_synth_F1_dsu/esu"/>
</dbReference>
<dbReference type="InterPro" id="IPR020546">
    <property type="entry name" value="ATP_synth_F1_dsu/esu_N"/>
</dbReference>
<dbReference type="InterPro" id="IPR020547">
    <property type="entry name" value="ATP_synth_F1_esu_C"/>
</dbReference>
<dbReference type="InterPro" id="IPR036771">
    <property type="entry name" value="ATPsynth_dsu/esu_N"/>
</dbReference>
<dbReference type="NCBIfam" id="TIGR01216">
    <property type="entry name" value="ATP_synt_epsi"/>
    <property type="match status" value="1"/>
</dbReference>
<dbReference type="PANTHER" id="PTHR13822">
    <property type="entry name" value="ATP SYNTHASE DELTA/EPSILON CHAIN"/>
    <property type="match status" value="1"/>
</dbReference>
<dbReference type="PANTHER" id="PTHR13822:SF10">
    <property type="entry name" value="ATP SYNTHASE EPSILON CHAIN, CHLOROPLASTIC"/>
    <property type="match status" value="1"/>
</dbReference>
<dbReference type="Pfam" id="PF00401">
    <property type="entry name" value="ATP-synt_DE"/>
    <property type="match status" value="1"/>
</dbReference>
<dbReference type="Pfam" id="PF02823">
    <property type="entry name" value="ATP-synt_DE_N"/>
    <property type="match status" value="1"/>
</dbReference>
<dbReference type="SUPFAM" id="SSF51344">
    <property type="entry name" value="Epsilon subunit of F1F0-ATP synthase N-terminal domain"/>
    <property type="match status" value="1"/>
</dbReference>
<protein>
    <recommendedName>
        <fullName evidence="1">ATP synthase epsilon chain, chloroplastic</fullName>
    </recommendedName>
    <alternativeName>
        <fullName evidence="1">ATP synthase F1 sector epsilon subunit</fullName>
    </alternativeName>
    <alternativeName>
        <fullName evidence="1">F-ATPase epsilon subunit</fullName>
    </alternativeName>
</protein>
<geneLocation type="chloroplast"/>
<sequence length="133" mass="14744">MTFNLCVLTPNRIIWDSEVKEIILSTNSGQIGVLPNHAPIATAVDIGILRIRFNDQWLTVALMGGFARIGNNEITVLVNDAERGSDIDPQEAQQTLEIAEANLRKAEGKRQRIEANLALRRARTRLEAVNVIS</sequence>
<name>ATPE_JASNU</name>